<keyword id="KW-0067">ATP-binding</keyword>
<keyword id="KW-0143">Chaperone</keyword>
<keyword id="KW-0963">Cytoplasm</keyword>
<keyword id="KW-0413">Isomerase</keyword>
<keyword id="KW-0547">Nucleotide-binding</keyword>
<keyword id="KW-1185">Reference proteome</keyword>
<accession>B9MDC5</accession>
<comment type="function">
    <text evidence="1">Together with its co-chaperonin GroES, plays an essential role in assisting protein folding. The GroEL-GroES system forms a nano-cage that allows encapsulation of the non-native substrate proteins and provides a physical environment optimized to promote and accelerate protein folding.</text>
</comment>
<comment type="catalytic activity">
    <reaction evidence="1">
        <text>ATP + H2O + a folded polypeptide = ADP + phosphate + an unfolded polypeptide.</text>
        <dbReference type="EC" id="5.6.1.7"/>
    </reaction>
</comment>
<comment type="subunit">
    <text evidence="1">Forms a cylinder of 14 subunits composed of two heptameric rings stacked back-to-back. Interacts with the co-chaperonin GroES.</text>
</comment>
<comment type="subcellular location">
    <subcellularLocation>
        <location evidence="1">Cytoplasm</location>
    </subcellularLocation>
</comment>
<comment type="similarity">
    <text evidence="1">Belongs to the chaperonin (HSP60) family.</text>
</comment>
<sequence length="546" mass="57199">MAAKDVVFGGEARARMVEGVNILANAVKVTLGPKGRNVVLERSFGAPTVTKDGVSVAKEIELKDKLQNMGAQLVKEVASKTNDIAGDGTTTATVLAQAIVREGSKYVAAGLNPMDLKRGIDKAVVALVEELKKASKATTTSKEIAQVGSISANSDESVGKIIADAMDKVGKEGVITVEDGKSLENELDVVEGMQFDRGYLSPYFINNPEKQSAILDNPFVLLFDKKISNIRDLLPTLEQVAKASRPLLIIAEEVDGEALATLVVNTIRGILKVVAVKAPGFGDRRKAMLEDIAILTGGKVIAEEVGLTLEKVTLADLGQAKRIEVGKENTTIIDGAGAAADIEARVKQIRIQIEEATSDYDREKLQERVAKLAGGVAVIKVGAATEVEMKEKKARVEDALHATRAAVEEGIVAGGGVALLRAKQAVGNLSTGNPEQDAGIKLVLKAVEAPLREIVANAGGEPSVVVNEVLNGKGNYGFNAANDTYGDMLEMGILDPTKVTRTALQNAASVASLLLTTEAMVAEAPKDESAAPAMPGGMGGMGDMGM</sequence>
<organism>
    <name type="scientific">Acidovorax ebreus (strain TPSY)</name>
    <name type="common">Diaphorobacter sp. (strain TPSY)</name>
    <dbReference type="NCBI Taxonomy" id="535289"/>
    <lineage>
        <taxon>Bacteria</taxon>
        <taxon>Pseudomonadati</taxon>
        <taxon>Pseudomonadota</taxon>
        <taxon>Betaproteobacteria</taxon>
        <taxon>Burkholderiales</taxon>
        <taxon>Comamonadaceae</taxon>
        <taxon>Diaphorobacter</taxon>
    </lineage>
</organism>
<protein>
    <recommendedName>
        <fullName evidence="1">Chaperonin GroEL</fullName>
        <ecNumber evidence="1">5.6.1.7</ecNumber>
    </recommendedName>
    <alternativeName>
        <fullName evidence="1">60 kDa chaperonin</fullName>
    </alternativeName>
    <alternativeName>
        <fullName evidence="1">Chaperonin-60</fullName>
        <shortName evidence="1">Cpn60</shortName>
    </alternativeName>
</protein>
<proteinExistence type="inferred from homology"/>
<dbReference type="EC" id="5.6.1.7" evidence="1"/>
<dbReference type="EMBL" id="CP001392">
    <property type="protein sequence ID" value="ACM32157.1"/>
    <property type="molecule type" value="Genomic_DNA"/>
</dbReference>
<dbReference type="RefSeq" id="WP_012655678.1">
    <property type="nucleotide sequence ID" value="NC_011992.1"/>
</dbReference>
<dbReference type="SMR" id="B9MDC5"/>
<dbReference type="KEGG" id="dia:Dtpsy_0677"/>
<dbReference type="eggNOG" id="COG0459">
    <property type="taxonomic scope" value="Bacteria"/>
</dbReference>
<dbReference type="HOGENOM" id="CLU_016503_3_0_4"/>
<dbReference type="Proteomes" id="UP000000450">
    <property type="component" value="Chromosome"/>
</dbReference>
<dbReference type="GO" id="GO:0005737">
    <property type="term" value="C:cytoplasm"/>
    <property type="evidence" value="ECO:0007669"/>
    <property type="project" value="UniProtKB-SubCell"/>
</dbReference>
<dbReference type="GO" id="GO:0005524">
    <property type="term" value="F:ATP binding"/>
    <property type="evidence" value="ECO:0007669"/>
    <property type="project" value="UniProtKB-UniRule"/>
</dbReference>
<dbReference type="GO" id="GO:0140662">
    <property type="term" value="F:ATP-dependent protein folding chaperone"/>
    <property type="evidence" value="ECO:0007669"/>
    <property type="project" value="InterPro"/>
</dbReference>
<dbReference type="GO" id="GO:0016853">
    <property type="term" value="F:isomerase activity"/>
    <property type="evidence" value="ECO:0007669"/>
    <property type="project" value="UniProtKB-KW"/>
</dbReference>
<dbReference type="GO" id="GO:0051082">
    <property type="term" value="F:unfolded protein binding"/>
    <property type="evidence" value="ECO:0007669"/>
    <property type="project" value="UniProtKB-UniRule"/>
</dbReference>
<dbReference type="GO" id="GO:0042026">
    <property type="term" value="P:protein refolding"/>
    <property type="evidence" value="ECO:0007669"/>
    <property type="project" value="UniProtKB-UniRule"/>
</dbReference>
<dbReference type="CDD" id="cd03344">
    <property type="entry name" value="GroEL"/>
    <property type="match status" value="1"/>
</dbReference>
<dbReference type="FunFam" id="1.10.560.10:FF:000001">
    <property type="entry name" value="60 kDa chaperonin"/>
    <property type="match status" value="1"/>
</dbReference>
<dbReference type="FunFam" id="3.50.7.10:FF:000001">
    <property type="entry name" value="60 kDa chaperonin"/>
    <property type="match status" value="1"/>
</dbReference>
<dbReference type="Gene3D" id="3.50.7.10">
    <property type="entry name" value="GroEL"/>
    <property type="match status" value="1"/>
</dbReference>
<dbReference type="Gene3D" id="1.10.560.10">
    <property type="entry name" value="GroEL-like equatorial domain"/>
    <property type="match status" value="1"/>
</dbReference>
<dbReference type="Gene3D" id="3.30.260.10">
    <property type="entry name" value="TCP-1-like chaperonin intermediate domain"/>
    <property type="match status" value="1"/>
</dbReference>
<dbReference type="HAMAP" id="MF_00600">
    <property type="entry name" value="CH60"/>
    <property type="match status" value="1"/>
</dbReference>
<dbReference type="InterPro" id="IPR018370">
    <property type="entry name" value="Chaperonin_Cpn60_CS"/>
</dbReference>
<dbReference type="InterPro" id="IPR001844">
    <property type="entry name" value="Cpn60/GroEL"/>
</dbReference>
<dbReference type="InterPro" id="IPR002423">
    <property type="entry name" value="Cpn60/GroEL/TCP-1"/>
</dbReference>
<dbReference type="InterPro" id="IPR027409">
    <property type="entry name" value="GroEL-like_apical_dom_sf"/>
</dbReference>
<dbReference type="InterPro" id="IPR027413">
    <property type="entry name" value="GROEL-like_equatorial_sf"/>
</dbReference>
<dbReference type="InterPro" id="IPR027410">
    <property type="entry name" value="TCP-1-like_intermed_sf"/>
</dbReference>
<dbReference type="NCBIfam" id="TIGR02348">
    <property type="entry name" value="GroEL"/>
    <property type="match status" value="1"/>
</dbReference>
<dbReference type="NCBIfam" id="NF000592">
    <property type="entry name" value="PRK00013.1"/>
    <property type="match status" value="1"/>
</dbReference>
<dbReference type="NCBIfam" id="NF009487">
    <property type="entry name" value="PRK12849.1"/>
    <property type="match status" value="1"/>
</dbReference>
<dbReference type="NCBIfam" id="NF009488">
    <property type="entry name" value="PRK12850.1"/>
    <property type="match status" value="1"/>
</dbReference>
<dbReference type="NCBIfam" id="NF009489">
    <property type="entry name" value="PRK12851.1"/>
    <property type="match status" value="1"/>
</dbReference>
<dbReference type="PANTHER" id="PTHR45633">
    <property type="entry name" value="60 KDA HEAT SHOCK PROTEIN, MITOCHONDRIAL"/>
    <property type="match status" value="1"/>
</dbReference>
<dbReference type="Pfam" id="PF00118">
    <property type="entry name" value="Cpn60_TCP1"/>
    <property type="match status" value="1"/>
</dbReference>
<dbReference type="PRINTS" id="PR00298">
    <property type="entry name" value="CHAPERONIN60"/>
</dbReference>
<dbReference type="SUPFAM" id="SSF52029">
    <property type="entry name" value="GroEL apical domain-like"/>
    <property type="match status" value="1"/>
</dbReference>
<dbReference type="SUPFAM" id="SSF48592">
    <property type="entry name" value="GroEL equatorial domain-like"/>
    <property type="match status" value="1"/>
</dbReference>
<dbReference type="SUPFAM" id="SSF54849">
    <property type="entry name" value="GroEL-intermediate domain like"/>
    <property type="match status" value="1"/>
</dbReference>
<dbReference type="PROSITE" id="PS00296">
    <property type="entry name" value="CHAPERONINS_CPN60"/>
    <property type="match status" value="1"/>
</dbReference>
<evidence type="ECO:0000255" key="1">
    <source>
        <dbReference type="HAMAP-Rule" id="MF_00600"/>
    </source>
</evidence>
<evidence type="ECO:0000256" key="2">
    <source>
        <dbReference type="SAM" id="MobiDB-lite"/>
    </source>
</evidence>
<name>CH60_ACIET</name>
<gene>
    <name evidence="1" type="primary">groEL</name>
    <name evidence="1" type="synonym">groL</name>
    <name type="ordered locus">Dtpsy_0677</name>
</gene>
<feature type="chain" id="PRO_1000147030" description="Chaperonin GroEL">
    <location>
        <begin position="1"/>
        <end position="546"/>
    </location>
</feature>
<feature type="region of interest" description="Disordered" evidence="2">
    <location>
        <begin position="527"/>
        <end position="546"/>
    </location>
</feature>
<feature type="compositionally biased region" description="Gly residues" evidence="2">
    <location>
        <begin position="536"/>
        <end position="546"/>
    </location>
</feature>
<feature type="binding site" evidence="1">
    <location>
        <begin position="30"/>
        <end position="33"/>
    </location>
    <ligand>
        <name>ATP</name>
        <dbReference type="ChEBI" id="CHEBI:30616"/>
    </ligand>
</feature>
<feature type="binding site" evidence="1">
    <location>
        <position position="51"/>
    </location>
    <ligand>
        <name>ATP</name>
        <dbReference type="ChEBI" id="CHEBI:30616"/>
    </ligand>
</feature>
<feature type="binding site" evidence="1">
    <location>
        <begin position="87"/>
        <end position="91"/>
    </location>
    <ligand>
        <name>ATP</name>
        <dbReference type="ChEBI" id="CHEBI:30616"/>
    </ligand>
</feature>
<feature type="binding site" evidence="1">
    <location>
        <position position="415"/>
    </location>
    <ligand>
        <name>ATP</name>
        <dbReference type="ChEBI" id="CHEBI:30616"/>
    </ligand>
</feature>
<feature type="binding site" evidence="1">
    <location>
        <begin position="479"/>
        <end position="481"/>
    </location>
    <ligand>
        <name>ATP</name>
        <dbReference type="ChEBI" id="CHEBI:30616"/>
    </ligand>
</feature>
<feature type="binding site" evidence="1">
    <location>
        <position position="495"/>
    </location>
    <ligand>
        <name>ATP</name>
        <dbReference type="ChEBI" id="CHEBI:30616"/>
    </ligand>
</feature>
<reference key="1">
    <citation type="submission" date="2009-01" db="EMBL/GenBank/DDBJ databases">
        <title>Complete sequence of Diaphorobacter sp. TPSY.</title>
        <authorList>
            <consortium name="US DOE Joint Genome Institute"/>
            <person name="Lucas S."/>
            <person name="Copeland A."/>
            <person name="Lapidus A."/>
            <person name="Glavina del Rio T."/>
            <person name="Tice H."/>
            <person name="Bruce D."/>
            <person name="Goodwin L."/>
            <person name="Pitluck S."/>
            <person name="Chertkov O."/>
            <person name="Brettin T."/>
            <person name="Detter J.C."/>
            <person name="Han C."/>
            <person name="Larimer F."/>
            <person name="Land M."/>
            <person name="Hauser L."/>
            <person name="Kyrpides N."/>
            <person name="Mikhailova N."/>
            <person name="Coates J.D."/>
        </authorList>
    </citation>
    <scope>NUCLEOTIDE SEQUENCE [LARGE SCALE GENOMIC DNA]</scope>
    <source>
        <strain>TPSY</strain>
    </source>
</reference>